<organism>
    <name type="scientific">Candida albicans (strain SC5314 / ATCC MYA-2876)</name>
    <name type="common">Yeast</name>
    <dbReference type="NCBI Taxonomy" id="237561"/>
    <lineage>
        <taxon>Eukaryota</taxon>
        <taxon>Fungi</taxon>
        <taxon>Dikarya</taxon>
        <taxon>Ascomycota</taxon>
        <taxon>Saccharomycotina</taxon>
        <taxon>Pichiomycetes</taxon>
        <taxon>Debaryomycetaceae</taxon>
        <taxon>Candida/Lodderomyces clade</taxon>
        <taxon>Candida</taxon>
    </lineage>
</organism>
<accession>Q5A210</accession>
<accession>A0A1D8PSA1</accession>
<feature type="signal peptide" evidence="1">
    <location>
        <begin position="1"/>
        <end position="20"/>
    </location>
</feature>
<feature type="chain" id="PRO_0000424937" description="Predicted GPI-anchored protein 34">
    <location>
        <begin position="21"/>
        <end position="169"/>
    </location>
</feature>
<feature type="propeptide" id="PRO_0000424938" description="Removed in mature form" evidence="1">
    <location>
        <begin position="170"/>
        <end position="197"/>
    </location>
</feature>
<feature type="lipid moiety-binding region" description="GPI-anchor amidated glycine" evidence="1">
    <location>
        <position position="169"/>
    </location>
</feature>
<feature type="glycosylation site" description="N-linked (GlcNAc...) asparagine" evidence="1">
    <location>
        <position position="110"/>
    </location>
</feature>
<feature type="glycosylation site" description="N-linked (GlcNAc...) asparagine" evidence="1">
    <location>
        <position position="114"/>
    </location>
</feature>
<feature type="glycosylation site" description="N-linked (GlcNAc...) asparagine" evidence="1">
    <location>
        <position position="152"/>
    </location>
</feature>
<proteinExistence type="evidence at protein level"/>
<evidence type="ECO:0000255" key="1"/>
<evidence type="ECO:0000269" key="2">
    <source>
    </source>
</evidence>
<evidence type="ECO:0000269" key="3">
    <source>
    </source>
</evidence>
<evidence type="ECO:0000269" key="4">
    <source>
    </source>
</evidence>
<evidence type="ECO:0000305" key="5"/>
<sequence>MKFTSLICSSILLIIPTVMADDASSDTTIINTITITKTLYTPEESSSLLSVQLESEASVASVASAASEAAASAASIASVASEASAASLASELSALAKVTEVKADVINNYNATINSTLSSSTIAPKISSSSSSSSSKKHESITSVITSSTKDNASAAVTTKTGSATSKAGAAAMAGPVPILTNSIFTAGLLALAAVLL</sequence>
<name>PGA34_CANAL</name>
<protein>
    <recommendedName>
        <fullName>Predicted GPI-anchored protein 34</fullName>
    </recommendedName>
</protein>
<dbReference type="EMBL" id="CP017630">
    <property type="protein sequence ID" value="AOW31017.1"/>
    <property type="molecule type" value="Genomic_DNA"/>
</dbReference>
<dbReference type="RefSeq" id="XP_715764.2">
    <property type="nucleotide sequence ID" value="XM_710671.2"/>
</dbReference>
<dbReference type="STRING" id="237561.Q5A210"/>
<dbReference type="GlyCosmos" id="Q5A210">
    <property type="glycosylation" value="3 sites, No reported glycans"/>
</dbReference>
<dbReference type="EnsemblFungi" id="CR_02750C_A-T">
    <property type="protein sequence ID" value="CR_02750C_A-T-p1"/>
    <property type="gene ID" value="CR_02750C_A"/>
</dbReference>
<dbReference type="GeneID" id="3642579"/>
<dbReference type="KEGG" id="cal:CAALFM_CR02750CA"/>
<dbReference type="CGD" id="CAL0000179698">
    <property type="gene designation" value="PGA34"/>
</dbReference>
<dbReference type="VEuPathDB" id="FungiDB:CR_02750C_A"/>
<dbReference type="HOGENOM" id="CLU_1348755_0_0_1"/>
<dbReference type="InParanoid" id="Q5A210"/>
<dbReference type="PRO" id="PR:Q5A210"/>
<dbReference type="Proteomes" id="UP000000559">
    <property type="component" value="Chromosome R"/>
</dbReference>
<dbReference type="GO" id="GO:0005886">
    <property type="term" value="C:plasma membrane"/>
    <property type="evidence" value="ECO:0007669"/>
    <property type="project" value="UniProtKB-SubCell"/>
</dbReference>
<dbReference type="GO" id="GO:0098552">
    <property type="term" value="C:side of membrane"/>
    <property type="evidence" value="ECO:0007669"/>
    <property type="project" value="UniProtKB-KW"/>
</dbReference>
<reference key="1">
    <citation type="journal article" date="2004" name="Proc. Natl. Acad. Sci. U.S.A.">
        <title>The diploid genome sequence of Candida albicans.</title>
        <authorList>
            <person name="Jones T."/>
            <person name="Federspiel N.A."/>
            <person name="Chibana H."/>
            <person name="Dungan J."/>
            <person name="Kalman S."/>
            <person name="Magee B.B."/>
            <person name="Newport G."/>
            <person name="Thorstenson Y.R."/>
            <person name="Agabian N."/>
            <person name="Magee P.T."/>
            <person name="Davis R.W."/>
            <person name="Scherer S."/>
        </authorList>
    </citation>
    <scope>NUCLEOTIDE SEQUENCE [LARGE SCALE GENOMIC DNA]</scope>
    <source>
        <strain>SC5314 / ATCC MYA-2876</strain>
    </source>
</reference>
<reference key="2">
    <citation type="journal article" date="2007" name="Genome Biol.">
        <title>Assembly of the Candida albicans genome into sixteen supercontigs aligned on the eight chromosomes.</title>
        <authorList>
            <person name="van het Hoog M."/>
            <person name="Rast T.J."/>
            <person name="Martchenko M."/>
            <person name="Grindle S."/>
            <person name="Dignard D."/>
            <person name="Hogues H."/>
            <person name="Cuomo C."/>
            <person name="Berriman M."/>
            <person name="Scherer S."/>
            <person name="Magee B.B."/>
            <person name="Whiteway M."/>
            <person name="Chibana H."/>
            <person name="Nantel A."/>
            <person name="Magee P.T."/>
        </authorList>
    </citation>
    <scope>GENOME REANNOTATION</scope>
    <source>
        <strain>SC5314 / ATCC MYA-2876</strain>
    </source>
</reference>
<reference key="3">
    <citation type="journal article" date="2013" name="Genome Biol.">
        <title>Assembly of a phased diploid Candida albicans genome facilitates allele-specific measurements and provides a simple model for repeat and indel structure.</title>
        <authorList>
            <person name="Muzzey D."/>
            <person name="Schwartz K."/>
            <person name="Weissman J.S."/>
            <person name="Sherlock G."/>
        </authorList>
    </citation>
    <scope>NUCLEOTIDE SEQUENCE [LARGE SCALE GENOMIC DNA]</scope>
    <scope>GENOME REANNOTATION</scope>
    <source>
        <strain>SC5314 / ATCC MYA-2876</strain>
    </source>
</reference>
<reference key="4">
    <citation type="journal article" date="2003" name="Yeast">
        <title>Genome-wide identification of fungal GPI proteins.</title>
        <authorList>
            <person name="De Groot P.W."/>
            <person name="Hellingwerf K.J."/>
            <person name="Klis F.M."/>
        </authorList>
    </citation>
    <scope>PREDICTION OF GPI-ANCHOR</scope>
</reference>
<reference key="5">
    <citation type="journal article" date="2006" name="Mol. Microbiol.">
        <title>The role of nutrient regulation and the Gpa2 protein in the mating pheromone response of C. albicans.</title>
        <authorList>
            <person name="Bennett R.J."/>
            <person name="Johnson A.D."/>
        </authorList>
    </citation>
    <scope>INDUCTION</scope>
</reference>
<reference key="6">
    <citation type="journal article" date="2011" name="Mol. Microbiol.">
        <title>Contribution of the glycolytic flux and hypoxia adaptation to efficient biofilm formation by Candida albicans.</title>
        <authorList>
            <person name="Bonhomme J."/>
            <person name="Chauvel M."/>
            <person name="Goyard S."/>
            <person name="Roux P."/>
            <person name="Rossignol T."/>
            <person name="d'Enfert C."/>
        </authorList>
    </citation>
    <scope>INDUCTION</scope>
</reference>
<reference key="7">
    <citation type="journal article" date="2012" name="Eukaryot. Cell">
        <title>Divergent targets of Candida albicans biofilm regulator Bcr1 in vitro and in vivo.</title>
        <authorList>
            <person name="Fanning S."/>
            <person name="Xu W."/>
            <person name="Solis N."/>
            <person name="Woolford C.A."/>
            <person name="Filler S.G."/>
            <person name="Mitchell A.P."/>
        </authorList>
    </citation>
    <scope>INDUCTION</scope>
</reference>
<comment type="function">
    <text>Predicted GPI-anchored protein which may have a role during host infection.</text>
</comment>
<comment type="subcellular location">
    <subcellularLocation>
        <location evidence="5">Cell membrane</location>
        <topology evidence="5">Lipid-anchor</topology>
        <topology evidence="5">GPI-anchor</topology>
    </subcellularLocation>
</comment>
<comment type="induction">
    <text evidence="2 3 4">Induced in biofilms and in oralpharyngeal candidasis. Repressed by alpha pheromone.</text>
</comment>
<keyword id="KW-1003">Cell membrane</keyword>
<keyword id="KW-0325">Glycoprotein</keyword>
<keyword id="KW-0336">GPI-anchor</keyword>
<keyword id="KW-0449">Lipoprotein</keyword>
<keyword id="KW-0472">Membrane</keyword>
<keyword id="KW-1185">Reference proteome</keyword>
<keyword id="KW-0732">Signal</keyword>
<keyword id="KW-0843">Virulence</keyword>
<gene>
    <name type="primary">PGA34</name>
    <name type="ordered locus">CAALFM_CR02750CA</name>
    <name type="ORF">CaO19.10351</name>
    <name type="ORF">CaO19.2833</name>
</gene>